<proteinExistence type="inferred from homology"/>
<organism>
    <name type="scientific">Yersinia pestis bv. Antiqua (strain Antiqua)</name>
    <dbReference type="NCBI Taxonomy" id="360102"/>
    <lineage>
        <taxon>Bacteria</taxon>
        <taxon>Pseudomonadati</taxon>
        <taxon>Pseudomonadota</taxon>
        <taxon>Gammaproteobacteria</taxon>
        <taxon>Enterobacterales</taxon>
        <taxon>Yersiniaceae</taxon>
        <taxon>Yersinia</taxon>
    </lineage>
</organism>
<reference key="1">
    <citation type="journal article" date="2006" name="J. Bacteriol.">
        <title>Complete genome sequence of Yersinia pestis strains Antiqua and Nepal516: evidence of gene reduction in an emerging pathogen.</title>
        <authorList>
            <person name="Chain P.S.G."/>
            <person name="Hu P."/>
            <person name="Malfatti S.A."/>
            <person name="Radnedge L."/>
            <person name="Larimer F."/>
            <person name="Vergez L.M."/>
            <person name="Worsham P."/>
            <person name="Chu M.C."/>
            <person name="Andersen G.L."/>
        </authorList>
    </citation>
    <scope>NUCLEOTIDE SEQUENCE [LARGE SCALE GENOMIC DNA]</scope>
    <source>
        <strain>Antiqua</strain>
    </source>
</reference>
<evidence type="ECO:0000255" key="1">
    <source>
        <dbReference type="HAMAP-Rule" id="MF_00046"/>
    </source>
</evidence>
<evidence type="ECO:0000305" key="2"/>
<sequence length="491" mass="53654">MNTQQLAKLRTIVPEMRRVRHIHFVGIGGAGMGGIAEVLANEGYQISGSDLAPNSVTQHLTALGAQIYFHHRPENVLDASVVVVSTAISADNPEIVAAREARIPVIRRAEMLAELMRYRHGIAVAGTHGKTTTTAMLSSIYAEAGLDPTFVNGGLVKAAGTHARLGSSRYLIAEADESDASFLHLQPMVAIVTNIEADHMDTYQGDFENLKQTFINFLHNLPFYGRAVMCIDDPVVRELLPRVGRHITTYGFSDDADVQIASYRQEGPQGHFTLRRQDKPLIEVTLNAPGRHNALNAAAAVAVATEEGIEDEDILRALVGFQGTGRRFDFLGNFPLAPVNGKEGSAMLVDDYGHHPTEVDATIKAARAGWPDKRIVMLFQPHRYTRTRDLYDDFANVLSQVDVLLMLDVYAAGEPPIPGADSRALCRTIRNRGKLDPILVPDSESAPEMLAQILNGEDLILVQGAGNIGKIARKLAEHKLQPQLKDEEHHG</sequence>
<protein>
    <recommendedName>
        <fullName evidence="1">UDP-N-acetylmuramate--L-alanine ligase</fullName>
        <ecNumber evidence="1">6.3.2.8</ecNumber>
    </recommendedName>
    <alternativeName>
        <fullName evidence="1">UDP-N-acetylmuramoyl-L-alanine synthetase</fullName>
    </alternativeName>
</protein>
<dbReference type="EC" id="6.3.2.8" evidence="1"/>
<dbReference type="EMBL" id="CP000308">
    <property type="protein sequence ID" value="ABG15507.1"/>
    <property type="status" value="ALT_INIT"/>
    <property type="molecule type" value="Genomic_DNA"/>
</dbReference>
<dbReference type="RefSeq" id="WP_002216457.1">
    <property type="nucleotide sequence ID" value="NZ_CP009906.1"/>
</dbReference>
<dbReference type="SMR" id="Q1C215"/>
<dbReference type="GeneID" id="57974059"/>
<dbReference type="KEGG" id="ypa:YPA_3545"/>
<dbReference type="UniPathway" id="UPA00219"/>
<dbReference type="Proteomes" id="UP000001971">
    <property type="component" value="Chromosome"/>
</dbReference>
<dbReference type="GO" id="GO:0005737">
    <property type="term" value="C:cytoplasm"/>
    <property type="evidence" value="ECO:0007669"/>
    <property type="project" value="UniProtKB-SubCell"/>
</dbReference>
<dbReference type="GO" id="GO:0005524">
    <property type="term" value="F:ATP binding"/>
    <property type="evidence" value="ECO:0007669"/>
    <property type="project" value="UniProtKB-UniRule"/>
</dbReference>
<dbReference type="GO" id="GO:0008763">
    <property type="term" value="F:UDP-N-acetylmuramate-L-alanine ligase activity"/>
    <property type="evidence" value="ECO:0007669"/>
    <property type="project" value="UniProtKB-UniRule"/>
</dbReference>
<dbReference type="GO" id="GO:0051301">
    <property type="term" value="P:cell division"/>
    <property type="evidence" value="ECO:0007669"/>
    <property type="project" value="UniProtKB-KW"/>
</dbReference>
<dbReference type="GO" id="GO:0071555">
    <property type="term" value="P:cell wall organization"/>
    <property type="evidence" value="ECO:0007669"/>
    <property type="project" value="UniProtKB-KW"/>
</dbReference>
<dbReference type="GO" id="GO:0009252">
    <property type="term" value="P:peptidoglycan biosynthetic process"/>
    <property type="evidence" value="ECO:0007669"/>
    <property type="project" value="UniProtKB-UniRule"/>
</dbReference>
<dbReference type="GO" id="GO:0008360">
    <property type="term" value="P:regulation of cell shape"/>
    <property type="evidence" value="ECO:0007669"/>
    <property type="project" value="UniProtKB-KW"/>
</dbReference>
<dbReference type="CDD" id="cd01983">
    <property type="entry name" value="SIMIBI"/>
    <property type="match status" value="1"/>
</dbReference>
<dbReference type="FunFam" id="3.40.1190.10:FF:000001">
    <property type="entry name" value="UDP-N-acetylmuramate--L-alanine ligase"/>
    <property type="match status" value="1"/>
</dbReference>
<dbReference type="FunFam" id="3.40.50.720:FF:000046">
    <property type="entry name" value="UDP-N-acetylmuramate--L-alanine ligase"/>
    <property type="match status" value="1"/>
</dbReference>
<dbReference type="FunFam" id="3.90.190.20:FF:000001">
    <property type="entry name" value="UDP-N-acetylmuramate--L-alanine ligase"/>
    <property type="match status" value="1"/>
</dbReference>
<dbReference type="Gene3D" id="3.90.190.20">
    <property type="entry name" value="Mur ligase, C-terminal domain"/>
    <property type="match status" value="1"/>
</dbReference>
<dbReference type="Gene3D" id="3.40.1190.10">
    <property type="entry name" value="Mur-like, catalytic domain"/>
    <property type="match status" value="1"/>
</dbReference>
<dbReference type="Gene3D" id="3.40.50.720">
    <property type="entry name" value="NAD(P)-binding Rossmann-like Domain"/>
    <property type="match status" value="1"/>
</dbReference>
<dbReference type="HAMAP" id="MF_00046">
    <property type="entry name" value="MurC"/>
    <property type="match status" value="1"/>
</dbReference>
<dbReference type="InterPro" id="IPR036565">
    <property type="entry name" value="Mur-like_cat_sf"/>
</dbReference>
<dbReference type="InterPro" id="IPR004101">
    <property type="entry name" value="Mur_ligase_C"/>
</dbReference>
<dbReference type="InterPro" id="IPR036615">
    <property type="entry name" value="Mur_ligase_C_dom_sf"/>
</dbReference>
<dbReference type="InterPro" id="IPR013221">
    <property type="entry name" value="Mur_ligase_cen"/>
</dbReference>
<dbReference type="InterPro" id="IPR000713">
    <property type="entry name" value="Mur_ligase_N"/>
</dbReference>
<dbReference type="InterPro" id="IPR050061">
    <property type="entry name" value="MurCDEF_pg_biosynth"/>
</dbReference>
<dbReference type="InterPro" id="IPR005758">
    <property type="entry name" value="UDP-N-AcMur_Ala_ligase_MurC"/>
</dbReference>
<dbReference type="NCBIfam" id="TIGR01082">
    <property type="entry name" value="murC"/>
    <property type="match status" value="1"/>
</dbReference>
<dbReference type="PANTHER" id="PTHR43445:SF3">
    <property type="entry name" value="UDP-N-ACETYLMURAMATE--L-ALANINE LIGASE"/>
    <property type="match status" value="1"/>
</dbReference>
<dbReference type="PANTHER" id="PTHR43445">
    <property type="entry name" value="UDP-N-ACETYLMURAMATE--L-ALANINE LIGASE-RELATED"/>
    <property type="match status" value="1"/>
</dbReference>
<dbReference type="Pfam" id="PF01225">
    <property type="entry name" value="Mur_ligase"/>
    <property type="match status" value="1"/>
</dbReference>
<dbReference type="Pfam" id="PF02875">
    <property type="entry name" value="Mur_ligase_C"/>
    <property type="match status" value="1"/>
</dbReference>
<dbReference type="Pfam" id="PF08245">
    <property type="entry name" value="Mur_ligase_M"/>
    <property type="match status" value="1"/>
</dbReference>
<dbReference type="SUPFAM" id="SSF51984">
    <property type="entry name" value="MurCD N-terminal domain"/>
    <property type="match status" value="1"/>
</dbReference>
<dbReference type="SUPFAM" id="SSF53623">
    <property type="entry name" value="MurD-like peptide ligases, catalytic domain"/>
    <property type="match status" value="1"/>
</dbReference>
<dbReference type="SUPFAM" id="SSF53244">
    <property type="entry name" value="MurD-like peptide ligases, peptide-binding domain"/>
    <property type="match status" value="1"/>
</dbReference>
<name>MURC_YERPA</name>
<accession>Q1C215</accession>
<comment type="function">
    <text evidence="1">Cell wall formation.</text>
</comment>
<comment type="catalytic activity">
    <reaction evidence="1">
        <text>UDP-N-acetyl-alpha-D-muramate + L-alanine + ATP = UDP-N-acetyl-alpha-D-muramoyl-L-alanine + ADP + phosphate + H(+)</text>
        <dbReference type="Rhea" id="RHEA:23372"/>
        <dbReference type="ChEBI" id="CHEBI:15378"/>
        <dbReference type="ChEBI" id="CHEBI:30616"/>
        <dbReference type="ChEBI" id="CHEBI:43474"/>
        <dbReference type="ChEBI" id="CHEBI:57972"/>
        <dbReference type="ChEBI" id="CHEBI:70757"/>
        <dbReference type="ChEBI" id="CHEBI:83898"/>
        <dbReference type="ChEBI" id="CHEBI:456216"/>
        <dbReference type="EC" id="6.3.2.8"/>
    </reaction>
</comment>
<comment type="pathway">
    <text evidence="1">Cell wall biogenesis; peptidoglycan biosynthesis.</text>
</comment>
<comment type="subcellular location">
    <subcellularLocation>
        <location evidence="1">Cytoplasm</location>
    </subcellularLocation>
</comment>
<comment type="similarity">
    <text evidence="1">Belongs to the MurCDEF family.</text>
</comment>
<comment type="sequence caution" evidence="2">
    <conflict type="erroneous initiation">
        <sequence resource="EMBL-CDS" id="ABG15507"/>
    </conflict>
</comment>
<keyword id="KW-0067">ATP-binding</keyword>
<keyword id="KW-0131">Cell cycle</keyword>
<keyword id="KW-0132">Cell division</keyword>
<keyword id="KW-0133">Cell shape</keyword>
<keyword id="KW-0961">Cell wall biogenesis/degradation</keyword>
<keyword id="KW-0963">Cytoplasm</keyword>
<keyword id="KW-0436">Ligase</keyword>
<keyword id="KW-0547">Nucleotide-binding</keyword>
<keyword id="KW-0573">Peptidoglycan synthesis</keyword>
<feature type="chain" id="PRO_0000336877" description="UDP-N-acetylmuramate--L-alanine ligase">
    <location>
        <begin position="1"/>
        <end position="491"/>
    </location>
</feature>
<feature type="binding site" evidence="1">
    <location>
        <begin position="126"/>
        <end position="132"/>
    </location>
    <ligand>
        <name>ATP</name>
        <dbReference type="ChEBI" id="CHEBI:30616"/>
    </ligand>
</feature>
<gene>
    <name evidence="1" type="primary">murC</name>
    <name type="ordered locus">YPA_3545</name>
</gene>